<reference key="1">
    <citation type="submission" date="2005-09" db="EMBL/GenBank/DDBJ databases">
        <title>Annotation of the Aspergillus terreus NIH2624 genome.</title>
        <authorList>
            <person name="Birren B.W."/>
            <person name="Lander E.S."/>
            <person name="Galagan J.E."/>
            <person name="Nusbaum C."/>
            <person name="Devon K."/>
            <person name="Henn M."/>
            <person name="Ma L.-J."/>
            <person name="Jaffe D.B."/>
            <person name="Butler J."/>
            <person name="Alvarez P."/>
            <person name="Gnerre S."/>
            <person name="Grabherr M."/>
            <person name="Kleber M."/>
            <person name="Mauceli E.W."/>
            <person name="Brockman W."/>
            <person name="Rounsley S."/>
            <person name="Young S.K."/>
            <person name="LaButti K."/>
            <person name="Pushparaj V."/>
            <person name="DeCaprio D."/>
            <person name="Crawford M."/>
            <person name="Koehrsen M."/>
            <person name="Engels R."/>
            <person name="Montgomery P."/>
            <person name="Pearson M."/>
            <person name="Howarth C."/>
            <person name="Larson L."/>
            <person name="Luoma S."/>
            <person name="White J."/>
            <person name="Alvarado L."/>
            <person name="Kodira C.D."/>
            <person name="Zeng Q."/>
            <person name="Oleary S."/>
            <person name="Yandava C."/>
            <person name="Denning D.W."/>
            <person name="Nierman W.C."/>
            <person name="Milne T."/>
            <person name="Madden K."/>
        </authorList>
    </citation>
    <scope>NUCLEOTIDE SEQUENCE [LARGE SCALE GENOMIC DNA]</scope>
    <source>
        <strain>NIH 2624 / FGSC A1156</strain>
    </source>
</reference>
<accession>Q0CMA7</accession>
<feature type="signal peptide" evidence="2">
    <location>
        <begin position="1"/>
        <end position="14"/>
    </location>
</feature>
<feature type="chain" id="PRO_0000394918" description="Probable alpha/beta-glucosidase agdC">
    <location>
        <begin position="15"/>
        <end position="879"/>
    </location>
</feature>
<feature type="region of interest" description="Disordered" evidence="4">
    <location>
        <begin position="446"/>
        <end position="494"/>
    </location>
</feature>
<feature type="compositionally biased region" description="Pro residues" evidence="4">
    <location>
        <begin position="451"/>
        <end position="467"/>
    </location>
</feature>
<feature type="active site" description="Nucleophile" evidence="3">
    <location>
        <position position="426"/>
    </location>
</feature>
<feature type="active site" evidence="1">
    <location>
        <position position="429"/>
    </location>
</feature>
<feature type="active site" description="Proton donor" evidence="1">
    <location>
        <position position="580"/>
    </location>
</feature>
<feature type="glycosylation site" description="N-linked (GlcNAc...) asparagine" evidence="2">
    <location>
        <position position="22"/>
    </location>
</feature>
<feature type="glycosylation site" description="N-linked (GlcNAc...) asparagine" evidence="2">
    <location>
        <position position="175"/>
    </location>
</feature>
<feature type="glycosylation site" description="N-linked (GlcNAc...) asparagine" evidence="2">
    <location>
        <position position="297"/>
    </location>
</feature>
<feature type="glycosylation site" description="N-linked (GlcNAc...) asparagine" evidence="2">
    <location>
        <position position="377"/>
    </location>
</feature>
<feature type="glycosylation site" description="N-linked (GlcNAc...) asparagine" evidence="2">
    <location>
        <position position="515"/>
    </location>
</feature>
<feature type="glycosylation site" description="N-linked (GlcNAc...) asparagine" evidence="2">
    <location>
        <position position="581"/>
    </location>
</feature>
<feature type="glycosylation site" description="N-linked (GlcNAc...) asparagine" evidence="2">
    <location>
        <position position="617"/>
    </location>
</feature>
<feature type="glycosylation site" description="N-linked (GlcNAc...) asparagine" evidence="2">
    <location>
        <position position="787"/>
    </location>
</feature>
<gene>
    <name type="primary">agdC</name>
    <name type="ORF">ATEG_05177</name>
</gene>
<comment type="function">
    <text evidence="1">Glucosidase involved in the degradation of cellulosic biomass. Has both alpha- and beta-glucosidase activity (By similarity).</text>
</comment>
<comment type="catalytic activity">
    <reaction>
        <text>Hydrolysis of terminal, non-reducing (1-&gt;4)-linked alpha-D-glucose residues with release of alpha-D-glucose.</text>
        <dbReference type="EC" id="3.2.1.20"/>
    </reaction>
</comment>
<comment type="catalytic activity">
    <reaction>
        <text>Hydrolysis of terminal, non-reducing beta-D-glucosyl residues with release of beta-D-glucose.</text>
        <dbReference type="EC" id="3.2.1.21"/>
    </reaction>
</comment>
<comment type="subcellular location">
    <subcellularLocation>
        <location evidence="1">Secreted</location>
    </subcellularLocation>
</comment>
<comment type="similarity">
    <text evidence="5">Belongs to the glycosyl hydrolase 31 family.</text>
</comment>
<sequence length="879" mass="98442">MLGSLLLLAPLAGAAVIGSRSNNTEPCPGYKVSNVREGVNSLTADLSLAGKPCNTYGTDLKDLKLLVEYQTERPDERLHVMIYDANEQVYQVPESVVPRVEGRKGARPHSALKFTYEEEPFSFTVTRDDEVLFDTSASNLIFQSQYLNLRTWLPEDPYLYGLGEHTDSLRLPTTNYTRTIWNRDSYGVPQNSNLYGAHPVYYDHRGESGTHGVFLLNSNGMDIRIDKTEDGQQYLEYNTLGGVFDFYFFTGSTPKETSMEYSKIVGLPAMQSYWSFGLHQCRYGYRDVYQVAEVVYNYSKAGIPLETMWTDIDYMNARKVFTLDPERFPLPKMRELVDYLHKHDQKYIVMVDPAVSAVDNEAYEHGVDQGIFLQQQNGSLYKGAVWPGVTVYPDWFHPDIQEYWNSEFSAFFSADDGVDIDGLWIDMNEAANFCTWPCADPEQYAIDNDLPPAPPAVRPSNPRPLPGFPDSFQPSSSKRAVKRAGGSKGAKVGLPGRNLVDPPYKIQNAAGSISNKTINTDIIHAGEGYAEYDTHNLYGTMMSSASRGAMLNRRPDVRPLIITRSTFAGAGSHVGHWLGDNLSQWDQYRISISQIVAFASMFQVPMVGADVCGFGGNTTEELCARWAALGAFYTFYRNHNEIGSTSQEFYQWPTVADSARKAIEIRYKLLDYIYTAFHKQTETGEPFLQPMFYLYPEDENTFANDVQFFYGDALLVSPVLTEGSTSVDAYFPDDIFYDWYTGAPVRGHGAKKTLENIDVTHIPLHVRGGNIIPVRSSGAMTTKELRNKSFELIIAPGLDGTASGSLYLDDGDSLEQKGTAEIKFEYRRGKLSVKGSFGRSAAGVKVQAVKVLGQKAESRMSAFRSTEFELTRPMEISLQ</sequence>
<organism>
    <name type="scientific">Aspergillus terreus (strain NIH 2624 / FGSC A1156)</name>
    <dbReference type="NCBI Taxonomy" id="341663"/>
    <lineage>
        <taxon>Eukaryota</taxon>
        <taxon>Fungi</taxon>
        <taxon>Dikarya</taxon>
        <taxon>Ascomycota</taxon>
        <taxon>Pezizomycotina</taxon>
        <taxon>Eurotiomycetes</taxon>
        <taxon>Eurotiomycetidae</taxon>
        <taxon>Eurotiales</taxon>
        <taxon>Aspergillaceae</taxon>
        <taxon>Aspergillus</taxon>
        <taxon>Aspergillus subgen. Circumdati</taxon>
    </lineage>
</organism>
<proteinExistence type="inferred from homology"/>
<keyword id="KW-0119">Carbohydrate metabolism</keyword>
<keyword id="KW-0961">Cell wall biogenesis/degradation</keyword>
<keyword id="KW-0325">Glycoprotein</keyword>
<keyword id="KW-0326">Glycosidase</keyword>
<keyword id="KW-0378">Hydrolase</keyword>
<keyword id="KW-0624">Polysaccharide degradation</keyword>
<keyword id="KW-1185">Reference proteome</keyword>
<keyword id="KW-0964">Secreted</keyword>
<keyword id="KW-0732">Signal</keyword>
<dbReference type="EC" id="3.2.1.20"/>
<dbReference type="EC" id="3.2.1.21"/>
<dbReference type="EMBL" id="CH476600">
    <property type="protein sequence ID" value="EAU34246.1"/>
    <property type="molecule type" value="Genomic_DNA"/>
</dbReference>
<dbReference type="RefSeq" id="XP_001214355.1">
    <property type="nucleotide sequence ID" value="XM_001214355.1"/>
</dbReference>
<dbReference type="SMR" id="Q0CMA7"/>
<dbReference type="STRING" id="341663.Q0CMA7"/>
<dbReference type="GlyCosmos" id="Q0CMA7">
    <property type="glycosylation" value="8 sites, No reported glycans"/>
</dbReference>
<dbReference type="EnsemblFungi" id="EAU34246">
    <property type="protein sequence ID" value="EAU34246"/>
    <property type="gene ID" value="ATEG_05177"/>
</dbReference>
<dbReference type="GeneID" id="4320812"/>
<dbReference type="VEuPathDB" id="FungiDB:ATEG_05177"/>
<dbReference type="eggNOG" id="KOG1065">
    <property type="taxonomic scope" value="Eukaryota"/>
</dbReference>
<dbReference type="HOGENOM" id="CLU_000631_11_0_1"/>
<dbReference type="OMA" id="YKGAVWP"/>
<dbReference type="OrthoDB" id="5839090at2759"/>
<dbReference type="Proteomes" id="UP000007963">
    <property type="component" value="Unassembled WGS sequence"/>
</dbReference>
<dbReference type="GO" id="GO:0005576">
    <property type="term" value="C:extracellular region"/>
    <property type="evidence" value="ECO:0007669"/>
    <property type="project" value="UniProtKB-SubCell"/>
</dbReference>
<dbReference type="GO" id="GO:0004558">
    <property type="term" value="F:alpha-1,4-glucosidase activity"/>
    <property type="evidence" value="ECO:0007669"/>
    <property type="project" value="UniProtKB-EC"/>
</dbReference>
<dbReference type="GO" id="GO:0008422">
    <property type="term" value="F:beta-glucosidase activity"/>
    <property type="evidence" value="ECO:0007669"/>
    <property type="project" value="UniProtKB-EC"/>
</dbReference>
<dbReference type="GO" id="GO:0030246">
    <property type="term" value="F:carbohydrate binding"/>
    <property type="evidence" value="ECO:0007669"/>
    <property type="project" value="InterPro"/>
</dbReference>
<dbReference type="GO" id="GO:0071555">
    <property type="term" value="P:cell wall organization"/>
    <property type="evidence" value="ECO:0007669"/>
    <property type="project" value="UniProtKB-KW"/>
</dbReference>
<dbReference type="GO" id="GO:0000272">
    <property type="term" value="P:polysaccharide catabolic process"/>
    <property type="evidence" value="ECO:0007669"/>
    <property type="project" value="UniProtKB-KW"/>
</dbReference>
<dbReference type="CDD" id="cd06602">
    <property type="entry name" value="GH31_MGAM_SI_GAA"/>
    <property type="match status" value="1"/>
</dbReference>
<dbReference type="CDD" id="cd14752">
    <property type="entry name" value="GH31_N"/>
    <property type="match status" value="1"/>
</dbReference>
<dbReference type="Gene3D" id="3.20.20.80">
    <property type="entry name" value="Glycosidases"/>
    <property type="match status" value="1"/>
</dbReference>
<dbReference type="Gene3D" id="2.60.40.1760">
    <property type="entry name" value="glycosyl hydrolase (family 31)"/>
    <property type="match status" value="1"/>
</dbReference>
<dbReference type="Gene3D" id="2.60.40.1180">
    <property type="entry name" value="Golgi alpha-mannosidase II"/>
    <property type="match status" value="2"/>
</dbReference>
<dbReference type="InterPro" id="IPR011013">
    <property type="entry name" value="Gal_mutarotase_sf_dom"/>
</dbReference>
<dbReference type="InterPro" id="IPR030458">
    <property type="entry name" value="Glyco_hydro_31_AS"/>
</dbReference>
<dbReference type="InterPro" id="IPR048395">
    <property type="entry name" value="Glyco_hydro_31_C"/>
</dbReference>
<dbReference type="InterPro" id="IPR025887">
    <property type="entry name" value="Glyco_hydro_31_N_dom"/>
</dbReference>
<dbReference type="InterPro" id="IPR000322">
    <property type="entry name" value="Glyco_hydro_31_TIM"/>
</dbReference>
<dbReference type="InterPro" id="IPR013780">
    <property type="entry name" value="Glyco_hydro_b"/>
</dbReference>
<dbReference type="InterPro" id="IPR017853">
    <property type="entry name" value="Glycoside_hydrolase_SF"/>
</dbReference>
<dbReference type="PANTHER" id="PTHR22762">
    <property type="entry name" value="ALPHA-GLUCOSIDASE"/>
    <property type="match status" value="1"/>
</dbReference>
<dbReference type="PANTHER" id="PTHR22762:SF67">
    <property type="entry name" value="ALPHA_BETA-GLUCOSIDASE AGDC-RELATED"/>
    <property type="match status" value="1"/>
</dbReference>
<dbReference type="Pfam" id="PF13802">
    <property type="entry name" value="Gal_mutarotas_2"/>
    <property type="match status" value="1"/>
</dbReference>
<dbReference type="Pfam" id="PF01055">
    <property type="entry name" value="Glyco_hydro_31_2nd"/>
    <property type="match status" value="1"/>
</dbReference>
<dbReference type="Pfam" id="PF21365">
    <property type="entry name" value="Glyco_hydro_31_3rd"/>
    <property type="match status" value="1"/>
</dbReference>
<dbReference type="SUPFAM" id="SSF51445">
    <property type="entry name" value="(Trans)glycosidases"/>
    <property type="match status" value="1"/>
</dbReference>
<dbReference type="SUPFAM" id="SSF74650">
    <property type="entry name" value="Galactose mutarotase-like"/>
    <property type="match status" value="1"/>
</dbReference>
<dbReference type="SUPFAM" id="SSF51011">
    <property type="entry name" value="Glycosyl hydrolase domain"/>
    <property type="match status" value="1"/>
</dbReference>
<dbReference type="PROSITE" id="PS00129">
    <property type="entry name" value="GLYCOSYL_HYDROL_F31_1"/>
    <property type="match status" value="1"/>
</dbReference>
<name>AGDC_ASPTN</name>
<evidence type="ECO:0000250" key="1"/>
<evidence type="ECO:0000255" key="2"/>
<evidence type="ECO:0000255" key="3">
    <source>
        <dbReference type="PROSITE-ProRule" id="PRU10066"/>
    </source>
</evidence>
<evidence type="ECO:0000256" key="4">
    <source>
        <dbReference type="SAM" id="MobiDB-lite"/>
    </source>
</evidence>
<evidence type="ECO:0000305" key="5"/>
<protein>
    <recommendedName>
        <fullName>Probable alpha/beta-glucosidase agdC</fullName>
        <ecNumber>3.2.1.20</ecNumber>
        <ecNumber>3.2.1.21</ecNumber>
    </recommendedName>
</protein>